<evidence type="ECO:0000250" key="1">
    <source>
        <dbReference type="UniProtKB" id="O75665"/>
    </source>
</evidence>
<evidence type="ECO:0000255" key="2"/>
<evidence type="ECO:0000255" key="3">
    <source>
        <dbReference type="PROSITE-ProRule" id="PRU00126"/>
    </source>
</evidence>
<evidence type="ECO:0000256" key="4">
    <source>
        <dbReference type="SAM" id="MobiDB-lite"/>
    </source>
</evidence>
<evidence type="ECO:0000269" key="5">
    <source>
    </source>
</evidence>
<evidence type="ECO:0000305" key="6"/>
<comment type="function">
    <text evidence="5">Component of the centrioles controlling mother and daughter centrioles length. Involved in the biogenesis of the cilium, a centriole-associated function. The cilium is a cell surface projection found in many vertebrate cells required to transduce signals important for development and tissue homeostasis. Plays an important role in development by regulating Wnt signaling and the specification of the left-right axis.</text>
</comment>
<comment type="subunit">
    <text evidence="1">Homooligomer. Interacts with TBC1D31; regulates OFD1 activity in cilium assembly.</text>
</comment>
<comment type="subcellular location">
    <subcellularLocation>
        <location evidence="5">Cytoplasm</location>
        <location evidence="5">Cytoskeleton</location>
        <location evidence="5">Microtubule organizing center</location>
        <location evidence="5">Centrosome</location>
        <location evidence="5">Centriole</location>
    </subcellularLocation>
    <subcellularLocation>
        <location evidence="5">Cytoplasm</location>
        <location evidence="5">Cytoskeleton</location>
        <location evidence="5">Microtubule organizing center</location>
        <location evidence="5">Centrosome</location>
        <location evidence="5">Centriolar satellite</location>
    </subcellularLocation>
    <subcellularLocation>
        <location evidence="5">Cytoplasm</location>
        <location evidence="5">Cytoskeleton</location>
        <location evidence="5">Cilium basal body</location>
    </subcellularLocation>
    <subcellularLocation>
        <location evidence="1">Nucleus</location>
    </subcellularLocation>
    <text evidence="1">Localizes to centriole distal ends.</text>
</comment>
<comment type="tissue specificity">
    <text evidence="5">Widely expressed.</text>
</comment>
<comment type="PTM">
    <text evidence="1">Phosphorylated. Phosphorylation at Ser-659, by the cAMP-dependent protein kinase PKA, triggers ubiquitination and proteasomal degradation of OFD1. Also increases its interaction with TBC1D31 and regulates its function in ciliogenesis.</text>
</comment>
<comment type="PTM">
    <text evidence="1">Ubiquitinated by PJA2, upon phosphorylation at Ser-659 by PKA, leads to the proteasomal degradation of OFD1.</text>
</comment>
<comment type="disruption phenotype">
    <text evidence="5">Embryos display several alterations during development including perturbed intravesicular fluid flow in Kuppfer's vesicle, convergent extension defects and randomization of laterality of organs.</text>
</comment>
<comment type="similarity">
    <text evidence="6">Belongs to the OFD1 family.</text>
</comment>
<dbReference type="EMBL" id="AJ534306">
    <property type="protein sequence ID" value="CAD58827.1"/>
    <property type="molecule type" value="mRNA"/>
</dbReference>
<dbReference type="SMR" id="Q7SZK7"/>
<dbReference type="FunCoup" id="Q7SZK7">
    <property type="interactions" value="1237"/>
</dbReference>
<dbReference type="STRING" id="7955.ENSDARP00000000952"/>
<dbReference type="PaxDb" id="7955-ENSDARP00000000952"/>
<dbReference type="AGR" id="ZFIN:ZDB-GENE-030131-5427"/>
<dbReference type="ZFIN" id="ZDB-GENE-030131-5427">
    <property type="gene designation" value="ofd1"/>
</dbReference>
<dbReference type="eggNOG" id="ENOG502QQR5">
    <property type="taxonomic scope" value="Eukaryota"/>
</dbReference>
<dbReference type="InParanoid" id="Q7SZK7"/>
<dbReference type="PRO" id="PR:Q7SZK7"/>
<dbReference type="Proteomes" id="UP000000437">
    <property type="component" value="Unplaced"/>
</dbReference>
<dbReference type="GO" id="GO:0034451">
    <property type="term" value="C:centriolar satellite"/>
    <property type="evidence" value="ECO:0007669"/>
    <property type="project" value="UniProtKB-SubCell"/>
</dbReference>
<dbReference type="GO" id="GO:0005814">
    <property type="term" value="C:centriole"/>
    <property type="evidence" value="ECO:0007669"/>
    <property type="project" value="UniProtKB-SubCell"/>
</dbReference>
<dbReference type="GO" id="GO:0005813">
    <property type="term" value="C:centrosome"/>
    <property type="evidence" value="ECO:0000314"/>
    <property type="project" value="ZFIN"/>
</dbReference>
<dbReference type="GO" id="GO:0036064">
    <property type="term" value="C:ciliary basal body"/>
    <property type="evidence" value="ECO:0000314"/>
    <property type="project" value="ZFIN"/>
</dbReference>
<dbReference type="GO" id="GO:0005737">
    <property type="term" value="C:cytoplasm"/>
    <property type="evidence" value="ECO:0007669"/>
    <property type="project" value="UniProtKB-KW"/>
</dbReference>
<dbReference type="GO" id="GO:0005576">
    <property type="term" value="C:extracellular region"/>
    <property type="evidence" value="ECO:0007669"/>
    <property type="project" value="GOC"/>
</dbReference>
<dbReference type="GO" id="GO:0005634">
    <property type="term" value="C:nucleus"/>
    <property type="evidence" value="ECO:0000314"/>
    <property type="project" value="ZFIN"/>
</dbReference>
<dbReference type="GO" id="GO:0030030">
    <property type="term" value="P:cell projection organization"/>
    <property type="evidence" value="ECO:0007669"/>
    <property type="project" value="UniProtKB-KW"/>
</dbReference>
<dbReference type="GO" id="GO:0060026">
    <property type="term" value="P:convergent extension"/>
    <property type="evidence" value="ECO:0000315"/>
    <property type="project" value="ZFIN"/>
</dbReference>
<dbReference type="GO" id="GO:0060027">
    <property type="term" value="P:convergent extension involved in gastrulation"/>
    <property type="evidence" value="ECO:0000315"/>
    <property type="project" value="ZFIN"/>
</dbReference>
<dbReference type="GO" id="GO:0061371">
    <property type="term" value="P:determination of heart left/right asymmetry"/>
    <property type="evidence" value="ECO:0000315"/>
    <property type="project" value="ZFIN"/>
</dbReference>
<dbReference type="GO" id="GO:0060287">
    <property type="term" value="P:epithelial cilium movement involved in determination of left/right asymmetry"/>
    <property type="evidence" value="ECO:0000315"/>
    <property type="project" value="ZFIN"/>
</dbReference>
<dbReference type="InterPro" id="IPR006594">
    <property type="entry name" value="LisH"/>
</dbReference>
<dbReference type="InterPro" id="IPR055289">
    <property type="entry name" value="OFD1"/>
</dbReference>
<dbReference type="PANTHER" id="PTHR39063:SF1">
    <property type="entry name" value="OFD1 CENTRIOLE AND CENTRIOLAR SATELLITE PROTEIN"/>
    <property type="match status" value="1"/>
</dbReference>
<dbReference type="PANTHER" id="PTHR39063">
    <property type="entry name" value="ORAL-FACIAL-DIGITAL SYNDROME 1 PROTEIN HOMOLOG"/>
    <property type="match status" value="1"/>
</dbReference>
<dbReference type="Pfam" id="PF16045">
    <property type="entry name" value="LisH_2"/>
    <property type="match status" value="1"/>
</dbReference>
<dbReference type="PROSITE" id="PS50896">
    <property type="entry name" value="LISH"/>
    <property type="match status" value="1"/>
</dbReference>
<protein>
    <recommendedName>
        <fullName evidence="6">Centriole and centriolar satellite protein ofd1</fullName>
    </recommendedName>
    <alternativeName>
        <fullName>Oral-facial-digital syndrome 1 protein homolog</fullName>
    </alternativeName>
</protein>
<keyword id="KW-0966">Cell projection</keyword>
<keyword id="KW-0969">Cilium</keyword>
<keyword id="KW-0970">Cilium biogenesis/degradation</keyword>
<keyword id="KW-0175">Coiled coil</keyword>
<keyword id="KW-0963">Cytoplasm</keyword>
<keyword id="KW-0206">Cytoskeleton</keyword>
<keyword id="KW-0539">Nucleus</keyword>
<keyword id="KW-0597">Phosphoprotein</keyword>
<keyword id="KW-1185">Reference proteome</keyword>
<keyword id="KW-0832">Ubl conjugation</keyword>
<gene>
    <name type="primary">ofd1</name>
    <name type="ORF">zgc:92562</name>
</gene>
<sequence length="901" mass="103862">MSASKEESLSPDEMRQKLYQTFKSRGLLDTLKTQLRNQLIQELQAPVRRGESASRRSADHTDSVLVSACNSVVVDHLRSAGYEYTLSVFQPECGLSKDKVLSSRDVLQIMKISPHMPLYKSLVSNIQSGQSGFLKSLLMELTDHSVYRDCSDNSTQTTSIAAHKESLVEKMQLIDEEYEVLRHRGDRWASVEAKLAEYRKEIQEQAQIELNAKLQHFMDVEIAKVKQEEKERSRKEILELRRDMEKTYELKSEALISREKNAIERLQKHQEIEEKDIYAQRQAVLREIESVRSREMELRQRMEAFDKSCALHEEKVKTMEDLLRRRELSVKTMEDSFEQKLKSELLKYQLELKEENMKRPEKLTENEERIRAEAARLQKEAAVVDAKTEDYERKSSEVKQLLMELESSRSQASLLKQQKELLREQLENMRDYPELKKHTLELQTRISLLKQQLEEKQQHNQRLTQELSAPSHEHLMLQAELRRLEAEHKLEKEELETQKNVLHTQLQHEVQQCALLKTQLMECEERTKWMNTHTEELKLQLQQTQQGPALRGPKSRTVAPEHDSDMVISALSRIRELEQEAERLEEAYRSHQQRALSAEDPTLHRGSQNYSRATAAQQHRVISRSPIFAGRPIEEEHEEFSRTPSPAERLASPPARRLSSTPQSASRSKRRADEEHDEHSLNPECVKGSSNTDRPALMFPERLISPIPAEELSSSISPNSPVMKSTTRHTQSPAKLQEILLSSSSQESSPQPEKITLHDLTEPIQMVSADQPCLLKDCEPELQQDHPDVQISSSSSSSSSSQREEEQQRETHTLQQQPHEEQTQEQRDDAGGHVTSAASPTGGAEEANPLQRYMQMLMQDKQQEQSPNKESSGSHEENLQSESHEHSAGVISHDEADDDFW</sequence>
<feature type="chain" id="PRO_0000394660" description="Centriole and centriolar satellite protein ofd1">
    <location>
        <begin position="1"/>
        <end position="901"/>
    </location>
</feature>
<feature type="domain" description="LisH" evidence="3">
    <location>
        <begin position="65"/>
        <end position="97"/>
    </location>
</feature>
<feature type="region of interest" description="Disordered" evidence="4">
    <location>
        <begin position="541"/>
        <end position="563"/>
    </location>
</feature>
<feature type="region of interest" description="Disordered" evidence="4">
    <location>
        <begin position="585"/>
        <end position="697"/>
    </location>
</feature>
<feature type="region of interest" description="Disordered" evidence="4">
    <location>
        <begin position="709"/>
        <end position="901"/>
    </location>
</feature>
<feature type="coiled-coil region" evidence="2">
    <location>
        <begin position="164"/>
        <end position="512"/>
    </location>
</feature>
<feature type="coiled-coil region" evidence="2">
    <location>
        <begin position="564"/>
        <end position="600"/>
    </location>
</feature>
<feature type="compositionally biased region" description="Polar residues" evidence="4">
    <location>
        <begin position="605"/>
        <end position="617"/>
    </location>
</feature>
<feature type="compositionally biased region" description="Basic and acidic residues" evidence="4">
    <location>
        <begin position="671"/>
        <end position="681"/>
    </location>
</feature>
<feature type="compositionally biased region" description="Polar residues" evidence="4">
    <location>
        <begin position="712"/>
        <end position="734"/>
    </location>
</feature>
<feature type="compositionally biased region" description="Low complexity" evidence="4">
    <location>
        <begin position="735"/>
        <end position="754"/>
    </location>
</feature>
<feature type="compositionally biased region" description="Basic and acidic residues" evidence="4">
    <location>
        <begin position="776"/>
        <end position="788"/>
    </location>
</feature>
<feature type="compositionally biased region" description="Low complexity" evidence="4">
    <location>
        <begin position="792"/>
        <end position="801"/>
    </location>
</feature>
<feature type="compositionally biased region" description="Basic and acidic residues" evidence="4">
    <location>
        <begin position="802"/>
        <end position="831"/>
    </location>
</feature>
<feature type="compositionally biased region" description="Basic and acidic residues" evidence="4">
    <location>
        <begin position="872"/>
        <end position="887"/>
    </location>
</feature>
<feature type="modified residue" description="Phosphoserine" evidence="1">
    <location>
        <position position="659"/>
    </location>
</feature>
<reference key="1">
    <citation type="journal article" date="2003" name="Genomics">
        <title>Characterization of the OFD1/Ofd1 genes on the human and mouse sex chromosomes and exclusion of Ofd1 for the Xpl mouse mutant.</title>
        <authorList>
            <person name="Ferrante M.I."/>
            <person name="Barra A."/>
            <person name="Truong J.P."/>
            <person name="Banfi S."/>
            <person name="Disteche C.M."/>
            <person name="Franco B."/>
        </authorList>
    </citation>
    <scope>NUCLEOTIDE SEQUENCE [MRNA]</scope>
    <scope>FUNCTION</scope>
    <scope>DISRUPTION PHENOTYPE</scope>
    <scope>SUBCELLULAR LOCATION</scope>
    <scope>TISSUE SPECIFICITY</scope>
</reference>
<name>OFD1_DANRE</name>
<proteinExistence type="evidence at transcript level"/>
<organism>
    <name type="scientific">Danio rerio</name>
    <name type="common">Zebrafish</name>
    <name type="synonym">Brachydanio rerio</name>
    <dbReference type="NCBI Taxonomy" id="7955"/>
    <lineage>
        <taxon>Eukaryota</taxon>
        <taxon>Metazoa</taxon>
        <taxon>Chordata</taxon>
        <taxon>Craniata</taxon>
        <taxon>Vertebrata</taxon>
        <taxon>Euteleostomi</taxon>
        <taxon>Actinopterygii</taxon>
        <taxon>Neopterygii</taxon>
        <taxon>Teleostei</taxon>
        <taxon>Ostariophysi</taxon>
        <taxon>Cypriniformes</taxon>
        <taxon>Danionidae</taxon>
        <taxon>Danioninae</taxon>
        <taxon>Danio</taxon>
    </lineage>
</organism>
<accession>Q7SZK7</accession>